<feature type="chain" id="PRO_1000071458" description="Elongation factor P">
    <location>
        <begin position="1"/>
        <end position="187"/>
    </location>
</feature>
<gene>
    <name evidence="1" type="primary">efp</name>
    <name type="ordered locus">Plav_2102</name>
</gene>
<comment type="function">
    <text evidence="1">Involved in peptide bond synthesis. Stimulates efficient translation and peptide-bond synthesis on native or reconstituted 70S ribosomes in vitro. Probably functions indirectly by altering the affinity of the ribosome for aminoacyl-tRNA, thus increasing their reactivity as acceptors for peptidyl transferase.</text>
</comment>
<comment type="pathway">
    <text evidence="1">Protein biosynthesis; polypeptide chain elongation.</text>
</comment>
<comment type="subcellular location">
    <subcellularLocation>
        <location evidence="1">Cytoplasm</location>
    </subcellularLocation>
</comment>
<comment type="similarity">
    <text evidence="1">Belongs to the elongation factor P family.</text>
</comment>
<sequence length="187" mass="21053">MKINGNEIRPGNVIEHEGGLWAAVKVQHVKPGKGGAFAQVELKNLVDGRKLNERFRSAETVERVRLEQKDYQYLYENDGMLTFMDNETYEQIELSREWVGDRAAFLQDGMKVTVESHEGKALGISLPDQVVLEITETEPTVKGQTATSSYKPALLENGVRVMVPPFITTGERIVVDTNEVTYLRRAD</sequence>
<accession>A7HUY3</accession>
<reference key="1">
    <citation type="journal article" date="2011" name="Stand. Genomic Sci.">
        <title>Complete genome sequence of Parvibaculum lavamentivorans type strain (DS-1(T)).</title>
        <authorList>
            <person name="Schleheck D."/>
            <person name="Weiss M."/>
            <person name="Pitluck S."/>
            <person name="Bruce D."/>
            <person name="Land M.L."/>
            <person name="Han S."/>
            <person name="Saunders E."/>
            <person name="Tapia R."/>
            <person name="Detter C."/>
            <person name="Brettin T."/>
            <person name="Han J."/>
            <person name="Woyke T."/>
            <person name="Goodwin L."/>
            <person name="Pennacchio L."/>
            <person name="Nolan M."/>
            <person name="Cook A.M."/>
            <person name="Kjelleberg S."/>
            <person name="Thomas T."/>
        </authorList>
    </citation>
    <scope>NUCLEOTIDE SEQUENCE [LARGE SCALE GENOMIC DNA]</scope>
    <source>
        <strain>DS-1 / DSM 13023 / NCIMB 13966</strain>
    </source>
</reference>
<keyword id="KW-0963">Cytoplasm</keyword>
<keyword id="KW-0251">Elongation factor</keyword>
<keyword id="KW-0648">Protein biosynthesis</keyword>
<keyword id="KW-1185">Reference proteome</keyword>
<evidence type="ECO:0000255" key="1">
    <source>
        <dbReference type="HAMAP-Rule" id="MF_00141"/>
    </source>
</evidence>
<protein>
    <recommendedName>
        <fullName evidence="1">Elongation factor P</fullName>
        <shortName evidence="1">EF-P</shortName>
    </recommendedName>
</protein>
<name>EFP_PARL1</name>
<proteinExistence type="inferred from homology"/>
<dbReference type="EMBL" id="CP000774">
    <property type="protein sequence ID" value="ABS63716.1"/>
    <property type="molecule type" value="Genomic_DNA"/>
</dbReference>
<dbReference type="RefSeq" id="WP_012111020.1">
    <property type="nucleotide sequence ID" value="NC_009719.1"/>
</dbReference>
<dbReference type="SMR" id="A7HUY3"/>
<dbReference type="STRING" id="402881.Plav_2102"/>
<dbReference type="KEGG" id="pla:Plav_2102"/>
<dbReference type="eggNOG" id="COG0231">
    <property type="taxonomic scope" value="Bacteria"/>
</dbReference>
<dbReference type="HOGENOM" id="CLU_074944_1_1_5"/>
<dbReference type="OrthoDB" id="9801844at2"/>
<dbReference type="UniPathway" id="UPA00345"/>
<dbReference type="Proteomes" id="UP000006377">
    <property type="component" value="Chromosome"/>
</dbReference>
<dbReference type="GO" id="GO:0005737">
    <property type="term" value="C:cytoplasm"/>
    <property type="evidence" value="ECO:0007669"/>
    <property type="project" value="UniProtKB-SubCell"/>
</dbReference>
<dbReference type="GO" id="GO:0003746">
    <property type="term" value="F:translation elongation factor activity"/>
    <property type="evidence" value="ECO:0007669"/>
    <property type="project" value="UniProtKB-UniRule"/>
</dbReference>
<dbReference type="GO" id="GO:0043043">
    <property type="term" value="P:peptide biosynthetic process"/>
    <property type="evidence" value="ECO:0007669"/>
    <property type="project" value="InterPro"/>
</dbReference>
<dbReference type="CDD" id="cd04470">
    <property type="entry name" value="S1_EF-P_repeat_1"/>
    <property type="match status" value="1"/>
</dbReference>
<dbReference type="CDD" id="cd05794">
    <property type="entry name" value="S1_EF-P_repeat_2"/>
    <property type="match status" value="1"/>
</dbReference>
<dbReference type="FunFam" id="2.30.30.30:FF:000003">
    <property type="entry name" value="Elongation factor P"/>
    <property type="match status" value="1"/>
</dbReference>
<dbReference type="FunFam" id="2.40.50.140:FF:000004">
    <property type="entry name" value="Elongation factor P"/>
    <property type="match status" value="1"/>
</dbReference>
<dbReference type="FunFam" id="2.40.50.140:FF:000009">
    <property type="entry name" value="Elongation factor P"/>
    <property type="match status" value="1"/>
</dbReference>
<dbReference type="Gene3D" id="2.30.30.30">
    <property type="match status" value="1"/>
</dbReference>
<dbReference type="Gene3D" id="2.40.50.140">
    <property type="entry name" value="Nucleic acid-binding proteins"/>
    <property type="match status" value="2"/>
</dbReference>
<dbReference type="HAMAP" id="MF_00141">
    <property type="entry name" value="EF_P"/>
    <property type="match status" value="1"/>
</dbReference>
<dbReference type="InterPro" id="IPR015365">
    <property type="entry name" value="Elong-fact-P_C"/>
</dbReference>
<dbReference type="InterPro" id="IPR012340">
    <property type="entry name" value="NA-bd_OB-fold"/>
</dbReference>
<dbReference type="InterPro" id="IPR014722">
    <property type="entry name" value="Rib_uL2_dom2"/>
</dbReference>
<dbReference type="InterPro" id="IPR020599">
    <property type="entry name" value="Transl_elong_fac_P/YeiP"/>
</dbReference>
<dbReference type="InterPro" id="IPR013185">
    <property type="entry name" value="Transl_elong_KOW-like"/>
</dbReference>
<dbReference type="InterPro" id="IPR001059">
    <property type="entry name" value="Transl_elong_P/YeiP_cen"/>
</dbReference>
<dbReference type="InterPro" id="IPR013852">
    <property type="entry name" value="Transl_elong_P/YeiP_CS"/>
</dbReference>
<dbReference type="InterPro" id="IPR011768">
    <property type="entry name" value="Transl_elongation_fac_P"/>
</dbReference>
<dbReference type="InterPro" id="IPR008991">
    <property type="entry name" value="Translation_prot_SH3-like_sf"/>
</dbReference>
<dbReference type="NCBIfam" id="TIGR00038">
    <property type="entry name" value="efp"/>
    <property type="match status" value="1"/>
</dbReference>
<dbReference type="NCBIfam" id="NF001810">
    <property type="entry name" value="PRK00529.1"/>
    <property type="match status" value="1"/>
</dbReference>
<dbReference type="PANTHER" id="PTHR30053">
    <property type="entry name" value="ELONGATION FACTOR P"/>
    <property type="match status" value="1"/>
</dbReference>
<dbReference type="PANTHER" id="PTHR30053:SF14">
    <property type="entry name" value="TRANSLATION ELONGATION FACTOR KOW-LIKE DOMAIN-CONTAINING PROTEIN"/>
    <property type="match status" value="1"/>
</dbReference>
<dbReference type="Pfam" id="PF01132">
    <property type="entry name" value="EFP"/>
    <property type="match status" value="1"/>
</dbReference>
<dbReference type="Pfam" id="PF08207">
    <property type="entry name" value="EFP_N"/>
    <property type="match status" value="1"/>
</dbReference>
<dbReference type="Pfam" id="PF09285">
    <property type="entry name" value="Elong-fact-P_C"/>
    <property type="match status" value="1"/>
</dbReference>
<dbReference type="PIRSF" id="PIRSF005901">
    <property type="entry name" value="EF-P"/>
    <property type="match status" value="1"/>
</dbReference>
<dbReference type="SMART" id="SM01185">
    <property type="entry name" value="EFP"/>
    <property type="match status" value="1"/>
</dbReference>
<dbReference type="SMART" id="SM00841">
    <property type="entry name" value="Elong-fact-P_C"/>
    <property type="match status" value="1"/>
</dbReference>
<dbReference type="SUPFAM" id="SSF50249">
    <property type="entry name" value="Nucleic acid-binding proteins"/>
    <property type="match status" value="2"/>
</dbReference>
<dbReference type="SUPFAM" id="SSF50104">
    <property type="entry name" value="Translation proteins SH3-like domain"/>
    <property type="match status" value="1"/>
</dbReference>
<dbReference type="PROSITE" id="PS01275">
    <property type="entry name" value="EFP"/>
    <property type="match status" value="1"/>
</dbReference>
<organism>
    <name type="scientific">Parvibaculum lavamentivorans (strain DS-1 / DSM 13023 / NCIMB 13966)</name>
    <dbReference type="NCBI Taxonomy" id="402881"/>
    <lineage>
        <taxon>Bacteria</taxon>
        <taxon>Pseudomonadati</taxon>
        <taxon>Pseudomonadota</taxon>
        <taxon>Alphaproteobacteria</taxon>
        <taxon>Hyphomicrobiales</taxon>
        <taxon>Parvibaculaceae</taxon>
        <taxon>Parvibaculum</taxon>
    </lineage>
</organism>